<name>RL15_HELMI</name>
<organism>
    <name type="scientific">Heliobacterium modesticaldum (strain ATCC 51547 / Ice1)</name>
    <dbReference type="NCBI Taxonomy" id="498761"/>
    <lineage>
        <taxon>Bacteria</taxon>
        <taxon>Bacillati</taxon>
        <taxon>Bacillota</taxon>
        <taxon>Clostridia</taxon>
        <taxon>Eubacteriales</taxon>
        <taxon>Heliobacteriaceae</taxon>
        <taxon>Heliomicrobium</taxon>
    </lineage>
</organism>
<reference key="1">
    <citation type="journal article" date="2008" name="J. Bacteriol.">
        <title>The genome of Heliobacterium modesticaldum, a phototrophic representative of the Firmicutes containing the simplest photosynthetic apparatus.</title>
        <authorList>
            <person name="Sattley W.M."/>
            <person name="Madigan M.T."/>
            <person name="Swingley W.D."/>
            <person name="Cheung P.C."/>
            <person name="Clocksin K.M."/>
            <person name="Conrad A.L."/>
            <person name="Dejesa L.C."/>
            <person name="Honchak B.M."/>
            <person name="Jung D.O."/>
            <person name="Karbach L.E."/>
            <person name="Kurdoglu A."/>
            <person name="Lahiri S."/>
            <person name="Mastrian S.D."/>
            <person name="Page L.E."/>
            <person name="Taylor H.L."/>
            <person name="Wang Z.T."/>
            <person name="Raymond J."/>
            <person name="Chen M."/>
            <person name="Blankenship R.E."/>
            <person name="Touchman J.W."/>
        </authorList>
    </citation>
    <scope>NUCLEOTIDE SEQUENCE [LARGE SCALE GENOMIC DNA]</scope>
    <source>
        <strain>ATCC 51547 / Ice1</strain>
    </source>
</reference>
<comment type="function">
    <text evidence="1">Binds to the 23S rRNA.</text>
</comment>
<comment type="subunit">
    <text evidence="1">Part of the 50S ribosomal subunit.</text>
</comment>
<comment type="similarity">
    <text evidence="1">Belongs to the universal ribosomal protein uL15 family.</text>
</comment>
<keyword id="KW-1185">Reference proteome</keyword>
<keyword id="KW-0687">Ribonucleoprotein</keyword>
<keyword id="KW-0689">Ribosomal protein</keyword>
<keyword id="KW-0694">RNA-binding</keyword>
<keyword id="KW-0699">rRNA-binding</keyword>
<proteinExistence type="inferred from homology"/>
<feature type="chain" id="PRO_1000142827" description="Large ribosomal subunit protein uL15">
    <location>
        <begin position="1"/>
        <end position="147"/>
    </location>
</feature>
<feature type="region of interest" description="Disordered" evidence="2">
    <location>
        <begin position="1"/>
        <end position="65"/>
    </location>
</feature>
<feature type="compositionally biased region" description="Gly residues" evidence="2">
    <location>
        <begin position="21"/>
        <end position="31"/>
    </location>
</feature>
<feature type="compositionally biased region" description="Gly residues" evidence="2">
    <location>
        <begin position="42"/>
        <end position="52"/>
    </location>
</feature>
<protein>
    <recommendedName>
        <fullName evidence="1">Large ribosomal subunit protein uL15</fullName>
    </recommendedName>
    <alternativeName>
        <fullName evidence="3">50S ribosomal protein L15</fullName>
    </alternativeName>
</protein>
<sequence length="147" mass="15672">MQLHELKPAPGSRQKPTRKGQGIGSGLGKTAGRGHKGQKARSGGGVRPGFEGGQQPLQRRLPKRGFTNARFKKEFAIINVGDLDVFEAGTVVTPELLLERKMIKKLKDGVKLLADGNIEKALTVKLHGVSEAAAEKIKAAGGQVEVM</sequence>
<dbReference type="EMBL" id="CP000930">
    <property type="protein sequence ID" value="ABZ83974.1"/>
    <property type="molecule type" value="Genomic_DNA"/>
</dbReference>
<dbReference type="RefSeq" id="WP_012282490.1">
    <property type="nucleotide sequence ID" value="NC_010337.2"/>
</dbReference>
<dbReference type="SMR" id="B0TC75"/>
<dbReference type="STRING" id="498761.HM1_1397"/>
<dbReference type="KEGG" id="hmo:HM1_1397"/>
<dbReference type="eggNOG" id="COG0200">
    <property type="taxonomic scope" value="Bacteria"/>
</dbReference>
<dbReference type="HOGENOM" id="CLU_055188_4_2_9"/>
<dbReference type="OrthoDB" id="9810293at2"/>
<dbReference type="Proteomes" id="UP000008550">
    <property type="component" value="Chromosome"/>
</dbReference>
<dbReference type="GO" id="GO:0022625">
    <property type="term" value="C:cytosolic large ribosomal subunit"/>
    <property type="evidence" value="ECO:0007669"/>
    <property type="project" value="TreeGrafter"/>
</dbReference>
<dbReference type="GO" id="GO:0019843">
    <property type="term" value="F:rRNA binding"/>
    <property type="evidence" value="ECO:0007669"/>
    <property type="project" value="UniProtKB-UniRule"/>
</dbReference>
<dbReference type="GO" id="GO:0003735">
    <property type="term" value="F:structural constituent of ribosome"/>
    <property type="evidence" value="ECO:0007669"/>
    <property type="project" value="InterPro"/>
</dbReference>
<dbReference type="GO" id="GO:0006412">
    <property type="term" value="P:translation"/>
    <property type="evidence" value="ECO:0007669"/>
    <property type="project" value="UniProtKB-UniRule"/>
</dbReference>
<dbReference type="Gene3D" id="3.100.10.10">
    <property type="match status" value="1"/>
</dbReference>
<dbReference type="HAMAP" id="MF_01341">
    <property type="entry name" value="Ribosomal_uL15"/>
    <property type="match status" value="1"/>
</dbReference>
<dbReference type="InterPro" id="IPR030878">
    <property type="entry name" value="Ribosomal_uL15"/>
</dbReference>
<dbReference type="InterPro" id="IPR021131">
    <property type="entry name" value="Ribosomal_uL15/eL18"/>
</dbReference>
<dbReference type="InterPro" id="IPR036227">
    <property type="entry name" value="Ribosomal_uL15/eL18_sf"/>
</dbReference>
<dbReference type="InterPro" id="IPR005749">
    <property type="entry name" value="Ribosomal_uL15_bac-type"/>
</dbReference>
<dbReference type="InterPro" id="IPR001196">
    <property type="entry name" value="Ribosomal_uL15_CS"/>
</dbReference>
<dbReference type="NCBIfam" id="TIGR01071">
    <property type="entry name" value="rplO_bact"/>
    <property type="match status" value="1"/>
</dbReference>
<dbReference type="PANTHER" id="PTHR12934">
    <property type="entry name" value="50S RIBOSOMAL PROTEIN L15"/>
    <property type="match status" value="1"/>
</dbReference>
<dbReference type="PANTHER" id="PTHR12934:SF11">
    <property type="entry name" value="LARGE RIBOSOMAL SUBUNIT PROTEIN UL15M"/>
    <property type="match status" value="1"/>
</dbReference>
<dbReference type="Pfam" id="PF00828">
    <property type="entry name" value="Ribosomal_L27A"/>
    <property type="match status" value="1"/>
</dbReference>
<dbReference type="SUPFAM" id="SSF52080">
    <property type="entry name" value="Ribosomal proteins L15p and L18e"/>
    <property type="match status" value="1"/>
</dbReference>
<dbReference type="PROSITE" id="PS00475">
    <property type="entry name" value="RIBOSOMAL_L15"/>
    <property type="match status" value="1"/>
</dbReference>
<accession>B0TC75</accession>
<evidence type="ECO:0000255" key="1">
    <source>
        <dbReference type="HAMAP-Rule" id="MF_01341"/>
    </source>
</evidence>
<evidence type="ECO:0000256" key="2">
    <source>
        <dbReference type="SAM" id="MobiDB-lite"/>
    </source>
</evidence>
<evidence type="ECO:0000305" key="3"/>
<gene>
    <name evidence="1" type="primary">rplO</name>
    <name type="ordered locus">Helmi_13490</name>
    <name type="ORF">HM1_1397</name>
</gene>